<evidence type="ECO:0000255" key="1">
    <source>
        <dbReference type="HAMAP-Rule" id="MF_01369"/>
    </source>
</evidence>
<evidence type="ECO:0000305" key="2"/>
<organism>
    <name type="scientific">Xylella fastidiosa (strain 9a5c)</name>
    <dbReference type="NCBI Taxonomy" id="160492"/>
    <lineage>
        <taxon>Bacteria</taxon>
        <taxon>Pseudomonadati</taxon>
        <taxon>Pseudomonadota</taxon>
        <taxon>Gammaproteobacteria</taxon>
        <taxon>Lysobacterales</taxon>
        <taxon>Lysobacteraceae</taxon>
        <taxon>Xylella</taxon>
    </lineage>
</organism>
<comment type="function">
    <text evidence="1">One of the early assembly proteins it binds 23S rRNA. One of the proteins that surrounds the polypeptide exit tunnel on the outside of the ribosome. Forms the main docking site for trigger factor binding to the ribosome.</text>
</comment>
<comment type="subunit">
    <text evidence="1">Part of the 50S ribosomal subunit. Contacts protein L29, and trigger factor when it is bound to the ribosome.</text>
</comment>
<comment type="similarity">
    <text evidence="1">Belongs to the universal ribosomal protein uL23 family.</text>
</comment>
<comment type="sequence caution" evidence="2">
    <conflict type="erroneous initiation">
        <sequence resource="EMBL-CDS" id="AAF83964"/>
    </conflict>
</comment>
<protein>
    <recommendedName>
        <fullName evidence="1">Large ribosomal subunit protein uL23</fullName>
    </recommendedName>
    <alternativeName>
        <fullName evidence="2">50S ribosomal protein L23</fullName>
    </alternativeName>
</protein>
<keyword id="KW-0687">Ribonucleoprotein</keyword>
<keyword id="KW-0689">Ribosomal protein</keyword>
<keyword id="KW-0694">RNA-binding</keyword>
<keyword id="KW-0699">rRNA-binding</keyword>
<sequence length="100" mass="11107">MNSSCEKIFGVLRSPRVSEKSSRLQEISNVYVFEVSSDATKVDVKNAVERLFDVKVGVVRVLNVKGKSKSFRNRGGSRSGWRKAYVRLIDGQSIDVAANV</sequence>
<proteinExistence type="inferred from homology"/>
<feature type="chain" id="PRO_0000272880" description="Large ribosomal subunit protein uL23">
    <location>
        <begin position="1"/>
        <end position="100"/>
    </location>
</feature>
<dbReference type="EMBL" id="AE003849">
    <property type="protein sequence ID" value="AAF83964.1"/>
    <property type="status" value="ALT_INIT"/>
    <property type="molecule type" value="Genomic_DNA"/>
</dbReference>
<dbReference type="PIR" id="B82717">
    <property type="entry name" value="B82717"/>
</dbReference>
<dbReference type="RefSeq" id="WP_038200766.1">
    <property type="nucleotide sequence ID" value="NC_002488.3"/>
</dbReference>
<dbReference type="SMR" id="Q9PE74"/>
<dbReference type="STRING" id="160492.XF_1154"/>
<dbReference type="KEGG" id="xfa:XF_1154"/>
<dbReference type="eggNOG" id="COG0089">
    <property type="taxonomic scope" value="Bacteria"/>
</dbReference>
<dbReference type="HOGENOM" id="CLU_037562_3_1_6"/>
<dbReference type="Proteomes" id="UP000000812">
    <property type="component" value="Chromosome"/>
</dbReference>
<dbReference type="GO" id="GO:1990904">
    <property type="term" value="C:ribonucleoprotein complex"/>
    <property type="evidence" value="ECO:0007669"/>
    <property type="project" value="UniProtKB-KW"/>
</dbReference>
<dbReference type="GO" id="GO:0005840">
    <property type="term" value="C:ribosome"/>
    <property type="evidence" value="ECO:0007669"/>
    <property type="project" value="UniProtKB-KW"/>
</dbReference>
<dbReference type="GO" id="GO:0019843">
    <property type="term" value="F:rRNA binding"/>
    <property type="evidence" value="ECO:0007669"/>
    <property type="project" value="UniProtKB-UniRule"/>
</dbReference>
<dbReference type="GO" id="GO:0003735">
    <property type="term" value="F:structural constituent of ribosome"/>
    <property type="evidence" value="ECO:0007669"/>
    <property type="project" value="InterPro"/>
</dbReference>
<dbReference type="GO" id="GO:0006412">
    <property type="term" value="P:translation"/>
    <property type="evidence" value="ECO:0007669"/>
    <property type="project" value="UniProtKB-UniRule"/>
</dbReference>
<dbReference type="FunFam" id="3.30.70.330:FF:000001">
    <property type="entry name" value="50S ribosomal protein L23"/>
    <property type="match status" value="1"/>
</dbReference>
<dbReference type="Gene3D" id="3.30.70.330">
    <property type="match status" value="1"/>
</dbReference>
<dbReference type="HAMAP" id="MF_01369_B">
    <property type="entry name" value="Ribosomal_uL23_B"/>
    <property type="match status" value="1"/>
</dbReference>
<dbReference type="InterPro" id="IPR012677">
    <property type="entry name" value="Nucleotide-bd_a/b_plait_sf"/>
</dbReference>
<dbReference type="InterPro" id="IPR013025">
    <property type="entry name" value="Ribosomal_uL23-like"/>
</dbReference>
<dbReference type="InterPro" id="IPR012678">
    <property type="entry name" value="Ribosomal_uL23/eL15/eS24_sf"/>
</dbReference>
<dbReference type="NCBIfam" id="NF004359">
    <property type="entry name" value="PRK05738.1-3"/>
    <property type="match status" value="1"/>
</dbReference>
<dbReference type="NCBIfam" id="NF004363">
    <property type="entry name" value="PRK05738.2-4"/>
    <property type="match status" value="1"/>
</dbReference>
<dbReference type="PANTHER" id="PTHR11620">
    <property type="entry name" value="60S RIBOSOMAL PROTEIN L23A"/>
    <property type="match status" value="1"/>
</dbReference>
<dbReference type="Pfam" id="PF00276">
    <property type="entry name" value="Ribosomal_L23"/>
    <property type="match status" value="1"/>
</dbReference>
<dbReference type="SUPFAM" id="SSF54189">
    <property type="entry name" value="Ribosomal proteins S24e, L23 and L15e"/>
    <property type="match status" value="1"/>
</dbReference>
<reference key="1">
    <citation type="journal article" date="2000" name="Nature">
        <title>The genome sequence of the plant pathogen Xylella fastidiosa.</title>
        <authorList>
            <person name="Simpson A.J.G."/>
            <person name="Reinach F.C."/>
            <person name="Arruda P."/>
            <person name="Abreu F.A."/>
            <person name="Acencio M."/>
            <person name="Alvarenga R."/>
            <person name="Alves L.M.C."/>
            <person name="Araya J.E."/>
            <person name="Baia G.S."/>
            <person name="Baptista C.S."/>
            <person name="Barros M.H."/>
            <person name="Bonaccorsi E.D."/>
            <person name="Bordin S."/>
            <person name="Bove J.M."/>
            <person name="Briones M.R.S."/>
            <person name="Bueno M.R.P."/>
            <person name="Camargo A.A."/>
            <person name="Camargo L.E.A."/>
            <person name="Carraro D.M."/>
            <person name="Carrer H."/>
            <person name="Colauto N.B."/>
            <person name="Colombo C."/>
            <person name="Costa F.F."/>
            <person name="Costa M.C.R."/>
            <person name="Costa-Neto C.M."/>
            <person name="Coutinho L.L."/>
            <person name="Cristofani M."/>
            <person name="Dias-Neto E."/>
            <person name="Docena C."/>
            <person name="El-Dorry H."/>
            <person name="Facincani A.P."/>
            <person name="Ferreira A.J.S."/>
            <person name="Ferreira V.C.A."/>
            <person name="Ferro J.A."/>
            <person name="Fraga J.S."/>
            <person name="Franca S.C."/>
            <person name="Franco M.C."/>
            <person name="Frohme M."/>
            <person name="Furlan L.R."/>
            <person name="Garnier M."/>
            <person name="Goldman G.H."/>
            <person name="Goldman M.H.S."/>
            <person name="Gomes S.L."/>
            <person name="Gruber A."/>
            <person name="Ho P.L."/>
            <person name="Hoheisel J.D."/>
            <person name="Junqueira M.L."/>
            <person name="Kemper E.L."/>
            <person name="Kitajima J.P."/>
            <person name="Krieger J.E."/>
            <person name="Kuramae E.E."/>
            <person name="Laigret F."/>
            <person name="Lambais M.R."/>
            <person name="Leite L.C.C."/>
            <person name="Lemos E.G.M."/>
            <person name="Lemos M.V.F."/>
            <person name="Lopes S.A."/>
            <person name="Lopes C.R."/>
            <person name="Machado J.A."/>
            <person name="Machado M.A."/>
            <person name="Madeira A.M.B.N."/>
            <person name="Madeira H.M.F."/>
            <person name="Marino C.L."/>
            <person name="Marques M.V."/>
            <person name="Martins E.A.L."/>
            <person name="Martins E.M.F."/>
            <person name="Matsukuma A.Y."/>
            <person name="Menck C.F.M."/>
            <person name="Miracca E.C."/>
            <person name="Miyaki C.Y."/>
            <person name="Monteiro-Vitorello C.B."/>
            <person name="Moon D.H."/>
            <person name="Nagai M.A."/>
            <person name="Nascimento A.L.T.O."/>
            <person name="Netto L.E.S."/>
            <person name="Nhani A. Jr."/>
            <person name="Nobrega F.G."/>
            <person name="Nunes L.R."/>
            <person name="Oliveira M.A."/>
            <person name="de Oliveira M.C."/>
            <person name="de Oliveira R.C."/>
            <person name="Palmieri D.A."/>
            <person name="Paris A."/>
            <person name="Peixoto B.R."/>
            <person name="Pereira G.A.G."/>
            <person name="Pereira H.A. Jr."/>
            <person name="Pesquero J.B."/>
            <person name="Quaggio R.B."/>
            <person name="Roberto P.G."/>
            <person name="Rodrigues V."/>
            <person name="de Rosa A.J.M."/>
            <person name="de Rosa V.E. Jr."/>
            <person name="de Sa R.G."/>
            <person name="Santelli R.V."/>
            <person name="Sawasaki H.E."/>
            <person name="da Silva A.C.R."/>
            <person name="da Silva A.M."/>
            <person name="da Silva F.R."/>
            <person name="Silva W.A. Jr."/>
            <person name="da Silveira J.F."/>
            <person name="Silvestri M.L.Z."/>
            <person name="Siqueira W.J."/>
            <person name="de Souza A.A."/>
            <person name="de Souza A.P."/>
            <person name="Terenzi M.F."/>
            <person name="Truffi D."/>
            <person name="Tsai S.M."/>
            <person name="Tsuhako M.H."/>
            <person name="Vallada H."/>
            <person name="Van Sluys M.A."/>
            <person name="Verjovski-Almeida S."/>
            <person name="Vettore A.L."/>
            <person name="Zago M.A."/>
            <person name="Zatz M."/>
            <person name="Meidanis J."/>
            <person name="Setubal J.C."/>
        </authorList>
    </citation>
    <scope>NUCLEOTIDE SEQUENCE [LARGE SCALE GENOMIC DNA]</scope>
    <source>
        <strain>9a5c</strain>
    </source>
</reference>
<accession>Q9PE74</accession>
<name>RL23_XYLFA</name>
<gene>
    <name evidence="1" type="primary">rplW</name>
    <name type="ordered locus">XF_1154</name>
</gene>